<comment type="function">
    <text evidence="2">Component of the ubiquinol-cytochrome c reductase complex (complex III or cytochrome b-c1 complex) that is part of the mitochondrial respiratory chain. The b-c1 complex mediates electron transfer from ubiquinol to cytochrome c. Contributes to the generation of a proton gradient across the mitochondrial membrane that is then used for ATP synthesis.</text>
</comment>
<comment type="cofactor">
    <cofactor evidence="2">
        <name>heme b</name>
        <dbReference type="ChEBI" id="CHEBI:60344"/>
    </cofactor>
    <text evidence="2">Binds 2 heme b groups non-covalently.</text>
</comment>
<comment type="subunit">
    <text evidence="2">The cytochrome bc1 complex contains 11 subunits: 3 respiratory subunits (MT-CYB, CYC1 and UQCRFS1), 2 core proteins (UQCRC1 and UQCRC2) and 6 low-molecular weight proteins (UQCRH/QCR6, UQCRB/QCR7, UQCRQ/QCR8, UQCR10/QCR9, UQCR11/QCR10 and a cleavage product of UQCRFS1). This cytochrome bc1 complex then forms a dimer.</text>
</comment>
<comment type="subcellular location">
    <subcellularLocation>
        <location evidence="2">Mitochondrion inner membrane</location>
        <topology evidence="2">Multi-pass membrane protein</topology>
    </subcellularLocation>
</comment>
<comment type="miscellaneous">
    <text evidence="1">Heme 1 (or BL or b562) is low-potential and absorbs at about 562 nm, and heme 2 (or BH or b566) is high-potential and absorbs at about 566 nm.</text>
</comment>
<comment type="similarity">
    <text evidence="3 4">Belongs to the cytochrome b family.</text>
</comment>
<comment type="caution">
    <text evidence="2">The full-length protein contains only eight transmembrane helices, not nine as predicted by bioinformatics tools.</text>
</comment>
<gene>
    <name type="primary">MT-CYB</name>
    <name type="synonym">COB</name>
    <name type="synonym">CYTB</name>
    <name type="synonym">MTCYB</name>
</gene>
<accession>Q597C5</accession>
<protein>
    <recommendedName>
        <fullName>Cytochrome b</fullName>
    </recommendedName>
    <alternativeName>
        <fullName>Complex III subunit 3</fullName>
    </alternativeName>
    <alternativeName>
        <fullName>Complex III subunit III</fullName>
    </alternativeName>
    <alternativeName>
        <fullName>Cytochrome b-c1 complex subunit 3</fullName>
    </alternativeName>
    <alternativeName>
        <fullName>Ubiquinol-cytochrome-c reductase complex cytochrome b subunit</fullName>
    </alternativeName>
</protein>
<sequence>MTNIRKTHPLLKILNNSLVDLPAPSSLTSWWNFGSLLGVCLAVQILTGLFLAMHYTSDTATAFNSVTHICRDVNYGWILRYLHANGASMFFICLYLHVGRGLYYGSYTYTETWNIGILLLFAVMATAFMGYVLPWGQMSFWGATVITNLLSAIPYIGTDLVQWIWGGFSVDKATLTRFFAFHFLLPFIIAALVMVHLLFLHETGSNNPTGIPSDSDMIPFHPYYTIKDILGLLIMLTALSTLVLFSPDLLGDPDNYTPANPLNTPPHIKPEWYFLFAYAILRSIPNKLGGVLALVLSILILAIVPLLHTSKQQSMMFRPLSQCLFWLLVADLLTLTWIGGQPVEYPYVIIGQAASILYFSIILVLMPITGTMENRLLKW</sequence>
<evidence type="ECO:0000250" key="1"/>
<evidence type="ECO:0000250" key="2">
    <source>
        <dbReference type="UniProtKB" id="P00157"/>
    </source>
</evidence>
<evidence type="ECO:0000255" key="3">
    <source>
        <dbReference type="PROSITE-ProRule" id="PRU00967"/>
    </source>
</evidence>
<evidence type="ECO:0000255" key="4">
    <source>
        <dbReference type="PROSITE-ProRule" id="PRU00968"/>
    </source>
</evidence>
<name>CYB_MICBR</name>
<keyword id="KW-0249">Electron transport</keyword>
<keyword id="KW-0349">Heme</keyword>
<keyword id="KW-0408">Iron</keyword>
<keyword id="KW-0472">Membrane</keyword>
<keyword id="KW-0479">Metal-binding</keyword>
<keyword id="KW-0496">Mitochondrion</keyword>
<keyword id="KW-0999">Mitochondrion inner membrane</keyword>
<keyword id="KW-0679">Respiratory chain</keyword>
<keyword id="KW-0812">Transmembrane</keyword>
<keyword id="KW-1133">Transmembrane helix</keyword>
<keyword id="KW-0813">Transport</keyword>
<keyword id="KW-0830">Ubiquinone</keyword>
<proteinExistence type="inferred from homology"/>
<reference key="1">
    <citation type="submission" date="2003-09" db="EMBL/GenBank/DDBJ databases">
        <title>Molecular evidence for unrecognized biodiversity in the bat genus Micronycteris (Phyllostomidae), with descriptions of two new subgenera.</title>
        <authorList>
            <person name="Porter C.A."/>
            <person name="Hoofer S.R."/>
            <person name="Cline C.A."/>
            <person name="Hoffmann F.G."/>
            <person name="Baker R.J."/>
        </authorList>
    </citation>
    <scope>NUCLEOTIDE SEQUENCE [GENOMIC DNA]</scope>
</reference>
<geneLocation type="mitochondrion"/>
<feature type="chain" id="PRO_0000254712" description="Cytochrome b">
    <location>
        <begin position="1"/>
        <end position="379"/>
    </location>
</feature>
<feature type="transmembrane region" description="Helical" evidence="2">
    <location>
        <begin position="33"/>
        <end position="53"/>
    </location>
</feature>
<feature type="transmembrane region" description="Helical" evidence="2">
    <location>
        <begin position="77"/>
        <end position="98"/>
    </location>
</feature>
<feature type="transmembrane region" description="Helical" evidence="2">
    <location>
        <begin position="113"/>
        <end position="133"/>
    </location>
</feature>
<feature type="transmembrane region" description="Helical" evidence="2">
    <location>
        <begin position="178"/>
        <end position="198"/>
    </location>
</feature>
<feature type="transmembrane region" description="Helical" evidence="2">
    <location>
        <begin position="226"/>
        <end position="246"/>
    </location>
</feature>
<feature type="transmembrane region" description="Helical" evidence="2">
    <location>
        <begin position="288"/>
        <end position="308"/>
    </location>
</feature>
<feature type="transmembrane region" description="Helical" evidence="2">
    <location>
        <begin position="320"/>
        <end position="340"/>
    </location>
</feature>
<feature type="transmembrane region" description="Helical" evidence="2">
    <location>
        <begin position="347"/>
        <end position="367"/>
    </location>
</feature>
<feature type="binding site" description="axial binding residue" evidence="2">
    <location>
        <position position="83"/>
    </location>
    <ligand>
        <name>heme b</name>
        <dbReference type="ChEBI" id="CHEBI:60344"/>
        <label>b562</label>
    </ligand>
    <ligandPart>
        <name>Fe</name>
        <dbReference type="ChEBI" id="CHEBI:18248"/>
    </ligandPart>
</feature>
<feature type="binding site" description="axial binding residue" evidence="2">
    <location>
        <position position="97"/>
    </location>
    <ligand>
        <name>heme b</name>
        <dbReference type="ChEBI" id="CHEBI:60344"/>
        <label>b566</label>
    </ligand>
    <ligandPart>
        <name>Fe</name>
        <dbReference type="ChEBI" id="CHEBI:18248"/>
    </ligandPart>
</feature>
<feature type="binding site" description="axial binding residue" evidence="2">
    <location>
        <position position="182"/>
    </location>
    <ligand>
        <name>heme b</name>
        <dbReference type="ChEBI" id="CHEBI:60344"/>
        <label>b562</label>
    </ligand>
    <ligandPart>
        <name>Fe</name>
        <dbReference type="ChEBI" id="CHEBI:18248"/>
    </ligandPart>
</feature>
<feature type="binding site" description="axial binding residue" evidence="2">
    <location>
        <position position="196"/>
    </location>
    <ligand>
        <name>heme b</name>
        <dbReference type="ChEBI" id="CHEBI:60344"/>
        <label>b566</label>
    </ligand>
    <ligandPart>
        <name>Fe</name>
        <dbReference type="ChEBI" id="CHEBI:18248"/>
    </ligandPart>
</feature>
<feature type="binding site" evidence="2">
    <location>
        <position position="201"/>
    </location>
    <ligand>
        <name>a ubiquinone</name>
        <dbReference type="ChEBI" id="CHEBI:16389"/>
    </ligand>
</feature>
<dbReference type="EMBL" id="AY380770">
    <property type="protein sequence ID" value="AAR91783.1"/>
    <property type="molecule type" value="Genomic_DNA"/>
</dbReference>
<dbReference type="EMBL" id="AY380771">
    <property type="protein sequence ID" value="AAR91784.1"/>
    <property type="molecule type" value="Genomic_DNA"/>
</dbReference>
<dbReference type="SMR" id="Q597C5"/>
<dbReference type="GO" id="GO:0005743">
    <property type="term" value="C:mitochondrial inner membrane"/>
    <property type="evidence" value="ECO:0007669"/>
    <property type="project" value="UniProtKB-SubCell"/>
</dbReference>
<dbReference type="GO" id="GO:0045275">
    <property type="term" value="C:respiratory chain complex III"/>
    <property type="evidence" value="ECO:0007669"/>
    <property type="project" value="InterPro"/>
</dbReference>
<dbReference type="GO" id="GO:0046872">
    <property type="term" value="F:metal ion binding"/>
    <property type="evidence" value="ECO:0007669"/>
    <property type="project" value="UniProtKB-KW"/>
</dbReference>
<dbReference type="GO" id="GO:0008121">
    <property type="term" value="F:ubiquinol-cytochrome-c reductase activity"/>
    <property type="evidence" value="ECO:0007669"/>
    <property type="project" value="InterPro"/>
</dbReference>
<dbReference type="GO" id="GO:0006122">
    <property type="term" value="P:mitochondrial electron transport, ubiquinol to cytochrome c"/>
    <property type="evidence" value="ECO:0007669"/>
    <property type="project" value="TreeGrafter"/>
</dbReference>
<dbReference type="CDD" id="cd00290">
    <property type="entry name" value="cytochrome_b_C"/>
    <property type="match status" value="1"/>
</dbReference>
<dbReference type="CDD" id="cd00284">
    <property type="entry name" value="Cytochrome_b_N"/>
    <property type="match status" value="1"/>
</dbReference>
<dbReference type="FunFam" id="1.20.810.10:FF:000002">
    <property type="entry name" value="Cytochrome b"/>
    <property type="match status" value="1"/>
</dbReference>
<dbReference type="Gene3D" id="1.20.810.10">
    <property type="entry name" value="Cytochrome Bc1 Complex, Chain C"/>
    <property type="match status" value="1"/>
</dbReference>
<dbReference type="InterPro" id="IPR005798">
    <property type="entry name" value="Cyt_b/b6_C"/>
</dbReference>
<dbReference type="InterPro" id="IPR036150">
    <property type="entry name" value="Cyt_b/b6_C_sf"/>
</dbReference>
<dbReference type="InterPro" id="IPR005797">
    <property type="entry name" value="Cyt_b/b6_N"/>
</dbReference>
<dbReference type="InterPro" id="IPR027387">
    <property type="entry name" value="Cytb/b6-like_sf"/>
</dbReference>
<dbReference type="InterPro" id="IPR030689">
    <property type="entry name" value="Cytochrome_b"/>
</dbReference>
<dbReference type="InterPro" id="IPR048260">
    <property type="entry name" value="Cytochrome_b_C_euk/bac"/>
</dbReference>
<dbReference type="InterPro" id="IPR048259">
    <property type="entry name" value="Cytochrome_b_N_euk/bac"/>
</dbReference>
<dbReference type="InterPro" id="IPR016174">
    <property type="entry name" value="Di-haem_cyt_TM"/>
</dbReference>
<dbReference type="PANTHER" id="PTHR19271">
    <property type="entry name" value="CYTOCHROME B"/>
    <property type="match status" value="1"/>
</dbReference>
<dbReference type="PANTHER" id="PTHR19271:SF16">
    <property type="entry name" value="CYTOCHROME B"/>
    <property type="match status" value="1"/>
</dbReference>
<dbReference type="Pfam" id="PF00032">
    <property type="entry name" value="Cytochrom_B_C"/>
    <property type="match status" value="1"/>
</dbReference>
<dbReference type="Pfam" id="PF00033">
    <property type="entry name" value="Cytochrome_B"/>
    <property type="match status" value="1"/>
</dbReference>
<dbReference type="PIRSF" id="PIRSF038885">
    <property type="entry name" value="COB"/>
    <property type="match status" value="1"/>
</dbReference>
<dbReference type="SUPFAM" id="SSF81648">
    <property type="entry name" value="a domain/subunit of cytochrome bc1 complex (Ubiquinol-cytochrome c reductase)"/>
    <property type="match status" value="1"/>
</dbReference>
<dbReference type="SUPFAM" id="SSF81342">
    <property type="entry name" value="Transmembrane di-heme cytochromes"/>
    <property type="match status" value="1"/>
</dbReference>
<dbReference type="PROSITE" id="PS51003">
    <property type="entry name" value="CYTB_CTER"/>
    <property type="match status" value="1"/>
</dbReference>
<dbReference type="PROSITE" id="PS51002">
    <property type="entry name" value="CYTB_NTER"/>
    <property type="match status" value="1"/>
</dbReference>
<organism>
    <name type="scientific">Micronycteris brosseti</name>
    <name type="common">Brosset's big-eared bat</name>
    <dbReference type="NCBI Taxonomy" id="257473"/>
    <lineage>
        <taxon>Eukaryota</taxon>
        <taxon>Metazoa</taxon>
        <taxon>Chordata</taxon>
        <taxon>Craniata</taxon>
        <taxon>Vertebrata</taxon>
        <taxon>Euteleostomi</taxon>
        <taxon>Mammalia</taxon>
        <taxon>Eutheria</taxon>
        <taxon>Laurasiatheria</taxon>
        <taxon>Chiroptera</taxon>
        <taxon>Yangochiroptera</taxon>
        <taxon>Phyllostomidae</taxon>
        <taxon>Phyllostominae</taxon>
        <taxon>Micronycteris</taxon>
    </lineage>
</organism>